<reference key="1">
    <citation type="journal article" date="2005" name="Nature">
        <title>Initial sequence of the chimpanzee genome and comparison with the human genome.</title>
        <authorList>
            <consortium name="Chimpanzee sequencing and analysis consortium"/>
        </authorList>
    </citation>
    <scope>NUCLEOTIDE SEQUENCE [LARGE SCALE GENOMIC DNA]</scope>
</reference>
<reference key="2">
    <citation type="journal article" date="2007" name="Gene">
        <title>Aberrant termination of reproduction-related TMEM30C transcripts in the hominoids.</title>
        <authorList>
            <person name="Osada N."/>
            <person name="Hashimoto K."/>
            <person name="Hirai M."/>
            <person name="Kusuda J."/>
        </authorList>
    </citation>
    <scope>NUCLEOTIDE SEQUENCE [MRNA] OF 46-157 (ISOFORM 1)</scope>
    <scope>NUCLEOTIDE SEQUENCE [MRNA] OF 46-157 (ISOFORM 2)</scope>
    <source>
        <tissue>Testis</tissue>
    </source>
</reference>
<feature type="chain" id="PRO_0000292848" description="Cell cycle control protein 50C">
    <location>
        <begin position="1"/>
        <end position="157"/>
    </location>
</feature>
<feature type="topological domain" description="Cytoplasmic" evidence="1">
    <location>
        <begin position="1"/>
        <end position="34"/>
    </location>
</feature>
<feature type="transmembrane region" description="Helical" evidence="1">
    <location>
        <begin position="35"/>
        <end position="55"/>
    </location>
</feature>
<feature type="topological domain" description="Extracellular" evidence="1">
    <location>
        <begin position="56"/>
        <end position="157"/>
    </location>
</feature>
<feature type="glycosylation site" description="N-linked (GlcNAc...) asparagine" evidence="1">
    <location>
        <position position="66"/>
    </location>
</feature>
<feature type="splice variant" id="VSP_026451" description="In isoform 2." evidence="2">
    <original>GNVYMYYKLYGF</original>
    <variation>VGEIQETQLTLH</variation>
    <location>
        <begin position="102"/>
        <end position="113"/>
    </location>
</feature>
<feature type="splice variant" id="VSP_026452" description="In isoform 2." evidence="2">
    <location>
        <begin position="114"/>
        <end position="157"/>
    </location>
</feature>
<keyword id="KW-0025">Alternative splicing</keyword>
<keyword id="KW-0325">Glycoprotein</keyword>
<keyword id="KW-0472">Membrane</keyword>
<keyword id="KW-1185">Reference proteome</keyword>
<keyword id="KW-0812">Transmembrane</keyword>
<keyword id="KW-1133">Transmembrane helix</keyword>
<evidence type="ECO:0000255" key="1"/>
<evidence type="ECO:0000303" key="2">
    <source>
    </source>
</evidence>
<evidence type="ECO:0000305" key="3"/>
<proteinExistence type="evidence at transcript level"/>
<comment type="subcellular location">
    <subcellularLocation>
        <location evidence="3">Membrane</location>
        <topology evidence="3">Single-pass membrane protein</topology>
    </subcellularLocation>
</comment>
<comment type="alternative products">
    <event type="alternative splicing"/>
    <isoform>
        <id>A0ZT23-1</id>
        <name>1</name>
        <sequence type="displayed"/>
    </isoform>
    <isoform>
        <id>A0ZT23-2</id>
        <name>2</name>
        <sequence type="described" ref="VSP_026451 VSP_026452"/>
    </isoform>
</comment>
<comment type="similarity">
    <text evidence="3">Belongs to the CDC50/LEM3 family.</text>
</comment>
<comment type="caution">
    <text evidence="3">According to PubMed:17258408, chimpanzee like human only express a C-terminally truncated protein compared to orthologs.</text>
</comment>
<accession>A0ZT23</accession>
<accession>A0ZT24</accession>
<protein>
    <recommendedName>
        <fullName>Cell cycle control protein 50C</fullName>
    </recommendedName>
    <alternativeName>
        <fullName>Transmembrane protein 30C</fullName>
    </alternativeName>
</protein>
<organism>
    <name type="scientific">Pan troglodytes</name>
    <name type="common">Chimpanzee</name>
    <dbReference type="NCBI Taxonomy" id="9598"/>
    <lineage>
        <taxon>Eukaryota</taxon>
        <taxon>Metazoa</taxon>
        <taxon>Chordata</taxon>
        <taxon>Craniata</taxon>
        <taxon>Vertebrata</taxon>
        <taxon>Euteleostomi</taxon>
        <taxon>Mammalia</taxon>
        <taxon>Eutheria</taxon>
        <taxon>Euarchontoglires</taxon>
        <taxon>Primates</taxon>
        <taxon>Haplorrhini</taxon>
        <taxon>Catarrhini</taxon>
        <taxon>Hominidae</taxon>
        <taxon>Pan</taxon>
    </lineage>
</organism>
<name>CC50C_PANTR</name>
<dbReference type="EMBL" id="AB265818">
    <property type="protein sequence ID" value="BAF41211.1"/>
    <property type="molecule type" value="mRNA"/>
</dbReference>
<dbReference type="EMBL" id="AB265819">
    <property type="protein sequence ID" value="BAF41212.1"/>
    <property type="molecule type" value="mRNA"/>
</dbReference>
<dbReference type="STRING" id="9598.ENSPTRP00000056080"/>
<dbReference type="GlyCosmos" id="A0ZT23">
    <property type="glycosylation" value="1 site, No reported glycans"/>
</dbReference>
<dbReference type="PaxDb" id="9598-ENSPTRP00000056080"/>
<dbReference type="eggNOG" id="KOG2952">
    <property type="taxonomic scope" value="Eukaryota"/>
</dbReference>
<dbReference type="InParanoid" id="A0ZT23"/>
<dbReference type="Proteomes" id="UP000002277">
    <property type="component" value="Unplaced"/>
</dbReference>
<dbReference type="GO" id="GO:0005783">
    <property type="term" value="C:endoplasmic reticulum"/>
    <property type="evidence" value="ECO:0000318"/>
    <property type="project" value="GO_Central"/>
</dbReference>
<dbReference type="GO" id="GO:0005794">
    <property type="term" value="C:Golgi apparatus"/>
    <property type="evidence" value="ECO:0000318"/>
    <property type="project" value="GO_Central"/>
</dbReference>
<dbReference type="GO" id="GO:0005886">
    <property type="term" value="C:plasma membrane"/>
    <property type="evidence" value="ECO:0000318"/>
    <property type="project" value="GO_Central"/>
</dbReference>
<dbReference type="GO" id="GO:0045332">
    <property type="term" value="P:phospholipid translocation"/>
    <property type="evidence" value="ECO:0000318"/>
    <property type="project" value="GO_Central"/>
</dbReference>
<dbReference type="InterPro" id="IPR005045">
    <property type="entry name" value="CDC50/LEM3_fam"/>
</dbReference>
<dbReference type="PANTHER" id="PTHR10926">
    <property type="entry name" value="CELL CYCLE CONTROL PROTEIN 50"/>
    <property type="match status" value="1"/>
</dbReference>
<dbReference type="PANTHER" id="PTHR10926:SF1">
    <property type="entry name" value="CELL CYCLE CONTROL PROTEIN 50C"/>
    <property type="match status" value="1"/>
</dbReference>
<dbReference type="Pfam" id="PF03381">
    <property type="entry name" value="CDC50"/>
    <property type="match status" value="1"/>
</dbReference>
<gene>
    <name type="primary">TMEM30C</name>
    <name type="synonym">CDC50C</name>
</gene>
<sequence>MEERAQHCLSRLLDNSALKQQELPIHRLYFTARRVLFVFFATGIFCLCMGIILILSARSTQEIEINYTRICANCAKLQENASNFDKECTCSIPFYLSGKMMGNVYMYYKLYGFYQNLYLYIRSRSNRQLVGKDVKVRLNLIWYNTLFLFLNQVDFSV</sequence>